<evidence type="ECO:0000255" key="1">
    <source>
        <dbReference type="HAMAP-Rule" id="MF_00412"/>
    </source>
</evidence>
<dbReference type="EC" id="1.2.1.41" evidence="1"/>
<dbReference type="EMBL" id="AE017333">
    <property type="protein sequence ID" value="AAU40317.1"/>
    <property type="molecule type" value="Genomic_DNA"/>
</dbReference>
<dbReference type="EMBL" id="CP000002">
    <property type="protein sequence ID" value="AAU22964.1"/>
    <property type="molecule type" value="Genomic_DNA"/>
</dbReference>
<dbReference type="RefSeq" id="WP_003180990.1">
    <property type="nucleotide sequence ID" value="NC_006322.1"/>
</dbReference>
<dbReference type="SMR" id="Q65KU7"/>
<dbReference type="STRING" id="279010.BL03751"/>
<dbReference type="KEGG" id="bld:BLi01413"/>
<dbReference type="KEGG" id="bli:BL03751"/>
<dbReference type="eggNOG" id="COG0014">
    <property type="taxonomic scope" value="Bacteria"/>
</dbReference>
<dbReference type="HOGENOM" id="CLU_030231_0_0_9"/>
<dbReference type="UniPathway" id="UPA00098">
    <property type="reaction ID" value="UER00360"/>
</dbReference>
<dbReference type="Proteomes" id="UP000000606">
    <property type="component" value="Chromosome"/>
</dbReference>
<dbReference type="GO" id="GO:0005737">
    <property type="term" value="C:cytoplasm"/>
    <property type="evidence" value="ECO:0007669"/>
    <property type="project" value="UniProtKB-SubCell"/>
</dbReference>
<dbReference type="GO" id="GO:0004350">
    <property type="term" value="F:glutamate-5-semialdehyde dehydrogenase activity"/>
    <property type="evidence" value="ECO:0007669"/>
    <property type="project" value="UniProtKB-UniRule"/>
</dbReference>
<dbReference type="GO" id="GO:0050661">
    <property type="term" value="F:NADP binding"/>
    <property type="evidence" value="ECO:0007669"/>
    <property type="project" value="InterPro"/>
</dbReference>
<dbReference type="GO" id="GO:0055129">
    <property type="term" value="P:L-proline biosynthetic process"/>
    <property type="evidence" value="ECO:0007669"/>
    <property type="project" value="UniProtKB-UniRule"/>
</dbReference>
<dbReference type="CDD" id="cd07079">
    <property type="entry name" value="ALDH_F18-19_ProA-GPR"/>
    <property type="match status" value="1"/>
</dbReference>
<dbReference type="FunFam" id="3.40.309.10:FF:000006">
    <property type="entry name" value="Gamma-glutamyl phosphate reductase"/>
    <property type="match status" value="1"/>
</dbReference>
<dbReference type="Gene3D" id="3.40.605.10">
    <property type="entry name" value="Aldehyde Dehydrogenase, Chain A, domain 1"/>
    <property type="match status" value="1"/>
</dbReference>
<dbReference type="Gene3D" id="3.40.309.10">
    <property type="entry name" value="Aldehyde Dehydrogenase, Chain A, domain 2"/>
    <property type="match status" value="1"/>
</dbReference>
<dbReference type="HAMAP" id="MF_00412">
    <property type="entry name" value="ProA"/>
    <property type="match status" value="1"/>
</dbReference>
<dbReference type="InterPro" id="IPR016161">
    <property type="entry name" value="Ald_DH/histidinol_DH"/>
</dbReference>
<dbReference type="InterPro" id="IPR016163">
    <property type="entry name" value="Ald_DH_C"/>
</dbReference>
<dbReference type="InterPro" id="IPR016162">
    <property type="entry name" value="Ald_DH_N"/>
</dbReference>
<dbReference type="InterPro" id="IPR015590">
    <property type="entry name" value="Aldehyde_DH_dom"/>
</dbReference>
<dbReference type="InterPro" id="IPR020593">
    <property type="entry name" value="G-glutamylP_reductase_CS"/>
</dbReference>
<dbReference type="InterPro" id="IPR012134">
    <property type="entry name" value="Glu-5-SA_DH"/>
</dbReference>
<dbReference type="InterPro" id="IPR000965">
    <property type="entry name" value="GPR_dom"/>
</dbReference>
<dbReference type="NCBIfam" id="NF001221">
    <property type="entry name" value="PRK00197.1"/>
    <property type="match status" value="1"/>
</dbReference>
<dbReference type="NCBIfam" id="TIGR00407">
    <property type="entry name" value="proA"/>
    <property type="match status" value="1"/>
</dbReference>
<dbReference type="PANTHER" id="PTHR11063:SF8">
    <property type="entry name" value="DELTA-1-PYRROLINE-5-CARBOXYLATE SYNTHASE"/>
    <property type="match status" value="1"/>
</dbReference>
<dbReference type="PANTHER" id="PTHR11063">
    <property type="entry name" value="GLUTAMATE SEMIALDEHYDE DEHYDROGENASE"/>
    <property type="match status" value="1"/>
</dbReference>
<dbReference type="Pfam" id="PF00171">
    <property type="entry name" value="Aldedh"/>
    <property type="match status" value="2"/>
</dbReference>
<dbReference type="PIRSF" id="PIRSF000151">
    <property type="entry name" value="GPR"/>
    <property type="match status" value="1"/>
</dbReference>
<dbReference type="SUPFAM" id="SSF53720">
    <property type="entry name" value="ALDH-like"/>
    <property type="match status" value="1"/>
</dbReference>
<dbReference type="PROSITE" id="PS01223">
    <property type="entry name" value="PROA"/>
    <property type="match status" value="1"/>
</dbReference>
<protein>
    <recommendedName>
        <fullName evidence="1">Gamma-glutamyl phosphate reductase 1</fullName>
        <shortName evidence="1">GPR 1</shortName>
        <ecNumber evidence="1">1.2.1.41</ecNumber>
    </recommendedName>
    <alternativeName>
        <fullName evidence="1">Glutamate-5-semialdehyde dehydrogenase 1</fullName>
    </alternativeName>
    <alternativeName>
        <fullName evidence="1">Glutamyl-gamma-semialdehyde dehydrogenase 1</fullName>
        <shortName evidence="1">GSA dehydrogenase 1</shortName>
    </alternativeName>
</protein>
<gene>
    <name evidence="1" type="primary">proA1</name>
    <name type="ordered locus">BLi01413</name>
    <name type="ordered locus">BL03751</name>
</gene>
<proteinExistence type="inferred from homology"/>
<feature type="chain" id="PRO_0000189693" description="Gamma-glutamyl phosphate reductase 1">
    <location>
        <begin position="1"/>
        <end position="415"/>
    </location>
</feature>
<name>PROA1_BACLD</name>
<comment type="function">
    <text evidence="1">Catalyzes the NADPH-dependent reduction of L-glutamate 5-phosphate into L-glutamate 5-semialdehyde and phosphate. The product spontaneously undergoes cyclization to form 1-pyrroline-5-carboxylate.</text>
</comment>
<comment type="catalytic activity">
    <reaction evidence="1">
        <text>L-glutamate 5-semialdehyde + phosphate + NADP(+) = L-glutamyl 5-phosphate + NADPH + H(+)</text>
        <dbReference type="Rhea" id="RHEA:19541"/>
        <dbReference type="ChEBI" id="CHEBI:15378"/>
        <dbReference type="ChEBI" id="CHEBI:43474"/>
        <dbReference type="ChEBI" id="CHEBI:57783"/>
        <dbReference type="ChEBI" id="CHEBI:58066"/>
        <dbReference type="ChEBI" id="CHEBI:58274"/>
        <dbReference type="ChEBI" id="CHEBI:58349"/>
        <dbReference type="EC" id="1.2.1.41"/>
    </reaction>
</comment>
<comment type="pathway">
    <text evidence="1">Amino-acid biosynthesis; L-proline biosynthesis; L-glutamate 5-semialdehyde from L-glutamate: step 2/2.</text>
</comment>
<comment type="subcellular location">
    <subcellularLocation>
        <location evidence="1">Cytoplasm</location>
    </subcellularLocation>
</comment>
<comment type="similarity">
    <text evidence="1">Belongs to the gamma-glutamyl phosphate reductase family.</text>
</comment>
<sequence length="415" mass="45473">MSEVIEKAKKAKVAKEELVHQPTERKNEALSFIAEAIRFKQDEILAENEKDIVRGKEKGFSPALLDRLALTPERLNDIADAVMLLTKLEDPVGETLETIRKDNGLFIENVRVPLGVVGMIYEARPNVTVDAATLCLKTGNAVILRGSSSAINSNKALVRVIREALERSALPEDAVQLIEDTSKETAKQLFTLNDGLDVLIPRGGKNLIDMVVRESTVPVLETGAGNCHIFIDESAQPDMAEQVVINAKTQRPSVCNAIETVLIHKGWAEEHTKALLQKLEEAGVEIRGDEAVCTMLPSAVPARETDWGTEFLAPVVSIKTVAGIDEAIRHIRQYGTRHSEAILTENQENARYFLTSVDAAAVYHNASTRFTDGFEFGYGAEIGISTQKLHARGPMGLKALTSSKYIIKGNGQIRI</sequence>
<organism>
    <name type="scientific">Bacillus licheniformis (strain ATCC 14580 / DSM 13 / JCM 2505 / CCUG 7422 / NBRC 12200 / NCIMB 9375 / NCTC 10341 / NRRL NRS-1264 / Gibson 46)</name>
    <dbReference type="NCBI Taxonomy" id="279010"/>
    <lineage>
        <taxon>Bacteria</taxon>
        <taxon>Bacillati</taxon>
        <taxon>Bacillota</taxon>
        <taxon>Bacilli</taxon>
        <taxon>Bacillales</taxon>
        <taxon>Bacillaceae</taxon>
        <taxon>Bacillus</taxon>
    </lineage>
</organism>
<keyword id="KW-0028">Amino-acid biosynthesis</keyword>
<keyword id="KW-0963">Cytoplasm</keyword>
<keyword id="KW-0521">NADP</keyword>
<keyword id="KW-0560">Oxidoreductase</keyword>
<keyword id="KW-0641">Proline biosynthesis</keyword>
<keyword id="KW-1185">Reference proteome</keyword>
<reference key="1">
    <citation type="journal article" date="2004" name="J. Mol. Microbiol. Biotechnol.">
        <title>The complete genome sequence of Bacillus licheniformis DSM13, an organism with great industrial potential.</title>
        <authorList>
            <person name="Veith B."/>
            <person name="Herzberg C."/>
            <person name="Steckel S."/>
            <person name="Feesche J."/>
            <person name="Maurer K.H."/>
            <person name="Ehrenreich P."/>
            <person name="Baeumer S."/>
            <person name="Henne A."/>
            <person name="Liesegang H."/>
            <person name="Merkl R."/>
            <person name="Ehrenreich A."/>
            <person name="Gottschalk G."/>
        </authorList>
    </citation>
    <scope>NUCLEOTIDE SEQUENCE [LARGE SCALE GENOMIC DNA]</scope>
    <source>
        <strain>ATCC 14580 / DSM 13 / JCM 2505 / CCUG 7422 / NBRC 12200 / NCIMB 9375 / NCTC 10341 / NRRL NRS-1264 / Gibson 46</strain>
    </source>
</reference>
<reference key="2">
    <citation type="journal article" date="2004" name="Genome Biol.">
        <title>Complete genome sequence of the industrial bacterium Bacillus licheniformis and comparisons with closely related Bacillus species.</title>
        <authorList>
            <person name="Rey M.W."/>
            <person name="Ramaiya P."/>
            <person name="Nelson B.A."/>
            <person name="Brody-Karpin S.D."/>
            <person name="Zaretsky E.J."/>
            <person name="Tang M."/>
            <person name="Lopez de Leon A."/>
            <person name="Xiang H."/>
            <person name="Gusti V."/>
            <person name="Clausen I.G."/>
            <person name="Olsen P.B."/>
            <person name="Rasmussen M.D."/>
            <person name="Andersen J.T."/>
            <person name="Joergensen P.L."/>
            <person name="Larsen T.S."/>
            <person name="Sorokin A."/>
            <person name="Bolotin A."/>
            <person name="Lapidus A."/>
            <person name="Galleron N."/>
            <person name="Ehrlich S.D."/>
            <person name="Berka R.M."/>
        </authorList>
    </citation>
    <scope>NUCLEOTIDE SEQUENCE [LARGE SCALE GENOMIC DNA]</scope>
    <source>
        <strain>ATCC 14580 / DSM 13 / JCM 2505 / CCUG 7422 / NBRC 12200 / NCIMB 9375 / NCTC 10341 / NRRL NRS-1264 / Gibson 46</strain>
    </source>
</reference>
<accession>Q65KU7</accession>
<accession>Q62W94</accession>